<name>PLHD1_HUMAN</name>
<proteinExistence type="evidence at protein level"/>
<protein>
    <recommendedName>
        <fullName>Pleckstrin homology domain-containing family D member 1</fullName>
        <shortName>PH domain-containing family D member 1</shortName>
    </recommendedName>
</protein>
<dbReference type="EMBL" id="AL133445">
    <property type="status" value="NOT_ANNOTATED_CDS"/>
    <property type="molecule type" value="Genomic_DNA"/>
</dbReference>
<dbReference type="EMBL" id="AL157996">
    <property type="status" value="NOT_ANNOTATED_CDS"/>
    <property type="molecule type" value="Genomic_DNA"/>
</dbReference>
<dbReference type="EMBL" id="CH471061">
    <property type="protein sequence ID" value="EAW80997.1"/>
    <property type="molecule type" value="Genomic_DNA"/>
</dbReference>
<dbReference type="EMBL" id="BC146872">
    <property type="protein sequence ID" value="AAI46873.1"/>
    <property type="molecule type" value="mRNA"/>
</dbReference>
<dbReference type="CCDS" id="CCDS53903.1"/>
<dbReference type="RefSeq" id="NP_001154970.1">
    <property type="nucleotide sequence ID" value="NM_001161498.2"/>
</dbReference>
<dbReference type="SMR" id="A6NEE1"/>
<dbReference type="BioGRID" id="134555">
    <property type="interactions" value="5"/>
</dbReference>
<dbReference type="FunCoup" id="A6NEE1">
    <property type="interactions" value="360"/>
</dbReference>
<dbReference type="IntAct" id="A6NEE1">
    <property type="interactions" value="2"/>
</dbReference>
<dbReference type="STRING" id="9606.ENSP00000317175"/>
<dbReference type="iPTMnet" id="A6NEE1"/>
<dbReference type="PhosphoSitePlus" id="A6NEE1"/>
<dbReference type="BioMuta" id="PLEKHD1"/>
<dbReference type="jPOST" id="A6NEE1"/>
<dbReference type="MassIVE" id="A6NEE1"/>
<dbReference type="PaxDb" id="9606-ENSP00000317175"/>
<dbReference type="PeptideAtlas" id="A6NEE1"/>
<dbReference type="ProteomicsDB" id="979"/>
<dbReference type="Pumba" id="A6NEE1"/>
<dbReference type="Antibodypedia" id="55088">
    <property type="antibodies" value="5 antibodies from 5 providers"/>
</dbReference>
<dbReference type="DNASU" id="400224"/>
<dbReference type="Ensembl" id="ENST00000322564.9">
    <property type="protein sequence ID" value="ENSP00000317175.7"/>
    <property type="gene ID" value="ENSG00000175985.10"/>
</dbReference>
<dbReference type="GeneID" id="400224"/>
<dbReference type="KEGG" id="hsa:400224"/>
<dbReference type="MANE-Select" id="ENST00000322564.9">
    <property type="protein sequence ID" value="ENSP00000317175.7"/>
    <property type="RefSeq nucleotide sequence ID" value="NM_001161498.2"/>
    <property type="RefSeq protein sequence ID" value="NP_001154970.1"/>
</dbReference>
<dbReference type="UCSC" id="uc010ttf.2">
    <property type="organism name" value="human"/>
</dbReference>
<dbReference type="AGR" id="HGNC:20148"/>
<dbReference type="CTD" id="400224"/>
<dbReference type="DisGeNET" id="400224"/>
<dbReference type="GeneCards" id="PLEKHD1"/>
<dbReference type="HGNC" id="HGNC:20148">
    <property type="gene designation" value="PLEKHD1"/>
</dbReference>
<dbReference type="HPA" id="ENSG00000175985">
    <property type="expression patterns" value="Tissue enhanced (brain, parathyroid gland, retina)"/>
</dbReference>
<dbReference type="neXtProt" id="NX_A6NEE1"/>
<dbReference type="OpenTargets" id="ENSG00000175985"/>
<dbReference type="VEuPathDB" id="HostDB:ENSG00000175985"/>
<dbReference type="eggNOG" id="ENOG502QTF5">
    <property type="taxonomic scope" value="Eukaryota"/>
</dbReference>
<dbReference type="GeneTree" id="ENSGT00950000183017"/>
<dbReference type="HOGENOM" id="CLU_035364_0_0_1"/>
<dbReference type="InParanoid" id="A6NEE1"/>
<dbReference type="OMA" id="ANEDMGM"/>
<dbReference type="OrthoDB" id="185175at2759"/>
<dbReference type="PAN-GO" id="A6NEE1">
    <property type="GO annotations" value="0 GO annotations based on evolutionary models"/>
</dbReference>
<dbReference type="PhylomeDB" id="A6NEE1"/>
<dbReference type="TreeFam" id="TF320494"/>
<dbReference type="PathwayCommons" id="A6NEE1"/>
<dbReference type="SignaLink" id="A6NEE1"/>
<dbReference type="BioGRID-ORCS" id="400224">
    <property type="hits" value="32 hits in 1138 CRISPR screens"/>
</dbReference>
<dbReference type="ChiTaRS" id="PLEKHD1">
    <property type="organism name" value="human"/>
</dbReference>
<dbReference type="GenomeRNAi" id="400224"/>
<dbReference type="Pharos" id="A6NEE1">
    <property type="development level" value="Tdark"/>
</dbReference>
<dbReference type="PRO" id="PR:A6NEE1"/>
<dbReference type="Proteomes" id="UP000005640">
    <property type="component" value="Chromosome 14"/>
</dbReference>
<dbReference type="RNAct" id="A6NEE1">
    <property type="molecule type" value="protein"/>
</dbReference>
<dbReference type="Bgee" id="ENSG00000175985">
    <property type="expression patterns" value="Expressed in right hemisphere of cerebellum and 60 other cell types or tissues"/>
</dbReference>
<dbReference type="CDD" id="cd13281">
    <property type="entry name" value="PH_PLEKHD1"/>
    <property type="match status" value="1"/>
</dbReference>
<dbReference type="Gene3D" id="2.30.29.30">
    <property type="entry name" value="Pleckstrin-homology domain (PH domain)/Phosphotyrosine-binding domain (PTB)"/>
    <property type="match status" value="1"/>
</dbReference>
<dbReference type="InterPro" id="IPR011993">
    <property type="entry name" value="PH-like_dom_sf"/>
</dbReference>
<dbReference type="InterPro" id="IPR001849">
    <property type="entry name" value="PH_domain"/>
</dbReference>
<dbReference type="PANTHER" id="PTHR14383:SF1">
    <property type="entry name" value="PLECKSTRIN HOMOLOGY DOMAIN-CONTAINING FAMILY D MEMBER 1"/>
    <property type="match status" value="1"/>
</dbReference>
<dbReference type="PANTHER" id="PTHR14383">
    <property type="entry name" value="SWAP-70 RECOMBINASE"/>
    <property type="match status" value="1"/>
</dbReference>
<dbReference type="Pfam" id="PF00169">
    <property type="entry name" value="PH"/>
    <property type="match status" value="1"/>
</dbReference>
<dbReference type="SMART" id="SM00233">
    <property type="entry name" value="PH"/>
    <property type="match status" value="1"/>
</dbReference>
<dbReference type="SUPFAM" id="SSF50729">
    <property type="entry name" value="PH domain-like"/>
    <property type="match status" value="1"/>
</dbReference>
<dbReference type="PROSITE" id="PS50003">
    <property type="entry name" value="PH_DOMAIN"/>
    <property type="match status" value="1"/>
</dbReference>
<organism>
    <name type="scientific">Homo sapiens</name>
    <name type="common">Human</name>
    <dbReference type="NCBI Taxonomy" id="9606"/>
    <lineage>
        <taxon>Eukaryota</taxon>
        <taxon>Metazoa</taxon>
        <taxon>Chordata</taxon>
        <taxon>Craniata</taxon>
        <taxon>Vertebrata</taxon>
        <taxon>Euteleostomi</taxon>
        <taxon>Mammalia</taxon>
        <taxon>Eutheria</taxon>
        <taxon>Euarchontoglires</taxon>
        <taxon>Primates</taxon>
        <taxon>Haplorrhini</taxon>
        <taxon>Catarrhini</taxon>
        <taxon>Hominidae</taxon>
        <taxon>Homo</taxon>
    </lineage>
</organism>
<feature type="chain" id="PRO_0000349196" description="Pleckstrin homology domain-containing family D member 1">
    <location>
        <begin position="1"/>
        <end position="506"/>
    </location>
</feature>
<feature type="domain" description="PH" evidence="3">
    <location>
        <begin position="28"/>
        <end position="136"/>
    </location>
</feature>
<feature type="coiled-coil region" evidence="2">
    <location>
        <begin position="146"/>
        <end position="391"/>
    </location>
</feature>
<feature type="modified residue" description="Omega-N-methylarginine" evidence="1">
    <location>
        <position position="503"/>
    </location>
</feature>
<comment type="similarity">
    <text evidence="4">Belongs to the PLEKHD1 family.</text>
</comment>
<accession>A6NEE1</accession>
<accession>B9EJC2</accession>
<gene>
    <name type="primary">PLEKHD1</name>
</gene>
<sequence length="506" mass="59203">MFTSKSNSVSPSPSLEQADSDALDISTKVQLYGVLWKRPFGRPSAKWSRRFFIIKESFLLYYSESEKKSFETNKYFNIHPKGVIPLGGCLVEPKEEPSMPYAMKISHQDFHGNILLAAESEFEQTQWLEMLQESGKVTWKNAQLGEAMIKSLEAQGLQLAKEKQEYLDKLMEETEELCLQREQREELERLNQVLEAEKQQFEEVVQELRMEQEQIKRELELTARCLKGVEQEKKELRHLTESLQQTLEELSIEKKKTLEMLEENENHLQTLANQSEQPPPSGGLHSNLRQIEEKMQQLLEEKLLAEKRMKENEERSRALEEEREFYSSQSQALQNSLQELTAEKQQAERELKAEVKVRMDLERRLREAEGALRSLEQGLNSKVRNKEKEERMRADVSHLKRFFEECIRNAELEAKMPVIMKNSVYIHKAATRRIKSCRFHRRRSSTSWNDMKPSQSFMTSQLDANNMEELKEVAKRLSRDQRFRESIYHIMATQPGAPSALSRGGK</sequence>
<keyword id="KW-0175">Coiled coil</keyword>
<keyword id="KW-0488">Methylation</keyword>
<keyword id="KW-1267">Proteomics identification</keyword>
<keyword id="KW-1185">Reference proteome</keyword>
<evidence type="ECO:0000250" key="1">
    <source>
        <dbReference type="UniProtKB" id="B2RPU2"/>
    </source>
</evidence>
<evidence type="ECO:0000255" key="2"/>
<evidence type="ECO:0000255" key="3">
    <source>
        <dbReference type="PROSITE-ProRule" id="PRU00145"/>
    </source>
</evidence>
<evidence type="ECO:0000305" key="4"/>
<reference key="1">
    <citation type="journal article" date="2003" name="Nature">
        <title>The DNA sequence and analysis of human chromosome 14.</title>
        <authorList>
            <person name="Heilig R."/>
            <person name="Eckenberg R."/>
            <person name="Petit J.-L."/>
            <person name="Fonknechten N."/>
            <person name="Da Silva C."/>
            <person name="Cattolico L."/>
            <person name="Levy M."/>
            <person name="Barbe V."/>
            <person name="De Berardinis V."/>
            <person name="Ureta-Vidal A."/>
            <person name="Pelletier E."/>
            <person name="Vico V."/>
            <person name="Anthouard V."/>
            <person name="Rowen L."/>
            <person name="Madan A."/>
            <person name="Qin S."/>
            <person name="Sun H."/>
            <person name="Du H."/>
            <person name="Pepin K."/>
            <person name="Artiguenave F."/>
            <person name="Robert C."/>
            <person name="Cruaud C."/>
            <person name="Bruels T."/>
            <person name="Jaillon O."/>
            <person name="Friedlander L."/>
            <person name="Samson G."/>
            <person name="Brottier P."/>
            <person name="Cure S."/>
            <person name="Segurens B."/>
            <person name="Aniere F."/>
            <person name="Samain S."/>
            <person name="Crespeau H."/>
            <person name="Abbasi N."/>
            <person name="Aiach N."/>
            <person name="Boscus D."/>
            <person name="Dickhoff R."/>
            <person name="Dors M."/>
            <person name="Dubois I."/>
            <person name="Friedman C."/>
            <person name="Gouyvenoux M."/>
            <person name="James R."/>
            <person name="Madan A."/>
            <person name="Mairey-Estrada B."/>
            <person name="Mangenot S."/>
            <person name="Martins N."/>
            <person name="Menard M."/>
            <person name="Oztas S."/>
            <person name="Ratcliffe A."/>
            <person name="Shaffer T."/>
            <person name="Trask B."/>
            <person name="Vacherie B."/>
            <person name="Bellemere C."/>
            <person name="Belser C."/>
            <person name="Besnard-Gonnet M."/>
            <person name="Bartol-Mavel D."/>
            <person name="Boutard M."/>
            <person name="Briez-Silla S."/>
            <person name="Combette S."/>
            <person name="Dufosse-Laurent V."/>
            <person name="Ferron C."/>
            <person name="Lechaplais C."/>
            <person name="Louesse C."/>
            <person name="Muselet D."/>
            <person name="Magdelenat G."/>
            <person name="Pateau E."/>
            <person name="Petit E."/>
            <person name="Sirvain-Trukniewicz P."/>
            <person name="Trybou A."/>
            <person name="Vega-Czarny N."/>
            <person name="Bataille E."/>
            <person name="Bluet E."/>
            <person name="Bordelais I."/>
            <person name="Dubois M."/>
            <person name="Dumont C."/>
            <person name="Guerin T."/>
            <person name="Haffray S."/>
            <person name="Hammadi R."/>
            <person name="Muanga J."/>
            <person name="Pellouin V."/>
            <person name="Robert D."/>
            <person name="Wunderle E."/>
            <person name="Gauguet G."/>
            <person name="Roy A."/>
            <person name="Sainte-Marthe L."/>
            <person name="Verdier J."/>
            <person name="Verdier-Discala C."/>
            <person name="Hillier L.W."/>
            <person name="Fulton L."/>
            <person name="McPherson J."/>
            <person name="Matsuda F."/>
            <person name="Wilson R."/>
            <person name="Scarpelli C."/>
            <person name="Gyapay G."/>
            <person name="Wincker P."/>
            <person name="Saurin W."/>
            <person name="Quetier F."/>
            <person name="Waterston R."/>
            <person name="Hood L."/>
            <person name="Weissenbach J."/>
        </authorList>
    </citation>
    <scope>NUCLEOTIDE SEQUENCE [LARGE SCALE GENOMIC DNA]</scope>
</reference>
<reference key="2">
    <citation type="submission" date="2005-07" db="EMBL/GenBank/DDBJ databases">
        <authorList>
            <person name="Mural R.J."/>
            <person name="Istrail S."/>
            <person name="Sutton G.G."/>
            <person name="Florea L."/>
            <person name="Halpern A.L."/>
            <person name="Mobarry C.M."/>
            <person name="Lippert R."/>
            <person name="Walenz B."/>
            <person name="Shatkay H."/>
            <person name="Dew I."/>
            <person name="Miller J.R."/>
            <person name="Flanigan M.J."/>
            <person name="Edwards N.J."/>
            <person name="Bolanos R."/>
            <person name="Fasulo D."/>
            <person name="Halldorsson B.V."/>
            <person name="Hannenhalli S."/>
            <person name="Turner R."/>
            <person name="Yooseph S."/>
            <person name="Lu F."/>
            <person name="Nusskern D.R."/>
            <person name="Shue B.C."/>
            <person name="Zheng X.H."/>
            <person name="Zhong F."/>
            <person name="Delcher A.L."/>
            <person name="Huson D.H."/>
            <person name="Kravitz S.A."/>
            <person name="Mouchard L."/>
            <person name="Reinert K."/>
            <person name="Remington K.A."/>
            <person name="Clark A.G."/>
            <person name="Waterman M.S."/>
            <person name="Eichler E.E."/>
            <person name="Adams M.D."/>
            <person name="Hunkapiller M.W."/>
            <person name="Myers E.W."/>
            <person name="Venter J.C."/>
        </authorList>
    </citation>
    <scope>NUCLEOTIDE SEQUENCE [LARGE SCALE GENOMIC DNA]</scope>
</reference>
<reference key="3">
    <citation type="journal article" date="2004" name="Genome Res.">
        <title>The status, quality, and expansion of the NIH full-length cDNA project: the Mammalian Gene Collection (MGC).</title>
        <authorList>
            <consortium name="The MGC Project Team"/>
        </authorList>
    </citation>
    <scope>NUCLEOTIDE SEQUENCE [LARGE SCALE MRNA]</scope>
    <source>
        <tissue>Brain</tissue>
    </source>
</reference>